<feature type="chain" id="PRO_0000187191" description="Ribonucleoside-diphosphate reductase large subunit">
    <location>
        <begin position="1"/>
        <end position="792"/>
    </location>
</feature>
<feature type="domain" description="ATP-cone" evidence="3">
    <location>
        <begin position="1"/>
        <end position="92"/>
    </location>
</feature>
<feature type="active site" description="Proton acceptor" evidence="1">
    <location>
        <position position="427"/>
    </location>
</feature>
<feature type="active site" description="Cysteine radical intermediate" evidence="1">
    <location>
        <position position="429"/>
    </location>
</feature>
<feature type="active site" description="Proton acceptor" evidence="1">
    <location>
        <position position="431"/>
    </location>
</feature>
<feature type="binding site" evidence="2">
    <location>
        <begin position="5"/>
        <end position="6"/>
    </location>
    <ligand>
        <name>ATP</name>
        <dbReference type="ChEBI" id="CHEBI:30616"/>
        <note>allosteric activator</note>
    </ligand>
</feature>
<feature type="binding site" evidence="2">
    <location>
        <begin position="11"/>
        <end position="17"/>
    </location>
    <ligand>
        <name>ATP</name>
        <dbReference type="ChEBI" id="CHEBI:30616"/>
        <note>allosteric activator</note>
    </ligand>
</feature>
<feature type="binding site" evidence="2">
    <location>
        <position position="53"/>
    </location>
    <ligand>
        <name>ATP</name>
        <dbReference type="ChEBI" id="CHEBI:30616"/>
        <note>allosteric activator</note>
    </ligand>
</feature>
<feature type="binding site" evidence="2">
    <location>
        <position position="57"/>
    </location>
    <ligand>
        <name>ATP</name>
        <dbReference type="ChEBI" id="CHEBI:30616"/>
        <note>allosteric activator</note>
    </ligand>
</feature>
<feature type="binding site" evidence="2">
    <location>
        <position position="202"/>
    </location>
    <ligand>
        <name>GDP</name>
        <dbReference type="ChEBI" id="CHEBI:58189"/>
    </ligand>
</feature>
<feature type="binding site" evidence="2">
    <location>
        <position position="217"/>
    </location>
    <ligand>
        <name>GDP</name>
        <dbReference type="ChEBI" id="CHEBI:58189"/>
    </ligand>
</feature>
<feature type="binding site" evidence="2">
    <location>
        <begin position="226"/>
        <end position="228"/>
    </location>
    <ligand>
        <name>dTTP</name>
        <dbReference type="ChEBI" id="CHEBI:37568"/>
        <note>allosteric effector that controls substrate specificity</note>
    </ligand>
</feature>
<feature type="binding site" evidence="2">
    <location>
        <position position="243"/>
    </location>
    <ligand>
        <name>dTTP</name>
        <dbReference type="ChEBI" id="CHEBI:37568"/>
        <note>allosteric effector that controls substrate specificity</note>
    </ligand>
</feature>
<feature type="binding site" evidence="2">
    <location>
        <position position="256"/>
    </location>
    <ligand>
        <name>dTTP</name>
        <dbReference type="ChEBI" id="CHEBI:37568"/>
        <note>allosteric effector that controls substrate specificity</note>
    </ligand>
</feature>
<feature type="binding site" evidence="2">
    <location>
        <begin position="263"/>
        <end position="264"/>
    </location>
    <ligand>
        <name>dTTP</name>
        <dbReference type="ChEBI" id="CHEBI:37568"/>
        <note>allosteric effector that controls substrate specificity</note>
    </ligand>
</feature>
<feature type="binding site" evidence="2">
    <location>
        <position position="427"/>
    </location>
    <ligand>
        <name>GDP</name>
        <dbReference type="ChEBI" id="CHEBI:58189"/>
    </ligand>
</feature>
<feature type="binding site" evidence="2">
    <location>
        <position position="431"/>
    </location>
    <ligand>
        <name>GDP</name>
        <dbReference type="ChEBI" id="CHEBI:58189"/>
    </ligand>
</feature>
<feature type="binding site" evidence="2">
    <location>
        <begin position="604"/>
        <end position="607"/>
    </location>
    <ligand>
        <name>GDP</name>
        <dbReference type="ChEBI" id="CHEBI:58189"/>
    </ligand>
</feature>
<feature type="site" description="Important for hydrogen atom transfer" evidence="1">
    <location>
        <position position="218"/>
    </location>
</feature>
<feature type="site" description="Important for hydrogen atom transfer" evidence="1">
    <location>
        <position position="444"/>
    </location>
</feature>
<feature type="site" description="Important for electron transfer" evidence="1">
    <location>
        <position position="737"/>
    </location>
</feature>
<feature type="site" description="Important for electron transfer" evidence="1">
    <location>
        <position position="738"/>
    </location>
</feature>
<feature type="site" description="Interacts with thioredoxin/glutaredoxin" evidence="1">
    <location>
        <position position="787"/>
    </location>
</feature>
<feature type="site" description="Interacts with thioredoxin/glutaredoxin" evidence="1">
    <location>
        <position position="790"/>
    </location>
</feature>
<feature type="modified residue" description="N6-acetyllysine" evidence="2">
    <location>
        <position position="17"/>
    </location>
</feature>
<feature type="modified residue" description="N6-acetyllysine" evidence="2">
    <location>
        <position position="376"/>
    </location>
</feature>
<feature type="modified residue" description="Phosphothreonine" evidence="2">
    <location>
        <position position="751"/>
    </location>
</feature>
<feature type="disulfide bond" description="Redox-active" evidence="1">
    <location>
        <begin position="218"/>
        <end position="444"/>
    </location>
</feature>
<feature type="sequence conflict" description="In Ref. 1; AAA40061." evidence="5" ref="1">
    <original>S</original>
    <variation>P</variation>
    <location>
        <position position="202"/>
    </location>
</feature>
<protein>
    <recommendedName>
        <fullName>Ribonucleoside-diphosphate reductase large subunit</fullName>
        <ecNumber>1.17.4.1</ecNumber>
    </recommendedName>
    <alternativeName>
        <fullName>Ribonucleoside-diphosphate reductase subunit M1</fullName>
    </alternativeName>
    <alternativeName>
        <fullName>Ribonucleotide reductase large subunit</fullName>
    </alternativeName>
</protein>
<reference key="1">
    <citation type="journal article" date="1985" name="J. Biol. Chem.">
        <title>Cloned mouse ribonucleotide reductase subunit M1 cDNA reveals amino acid sequence homology with Escherichia coli and herpesvirus ribonucleotide reductases.</title>
        <authorList>
            <person name="Caras I.W."/>
            <person name="Levinson B.B."/>
            <person name="Fabry M."/>
            <person name="Williams S.R."/>
            <person name="Martin D.W. Jr."/>
        </authorList>
    </citation>
    <scope>NUCLEOTIDE SEQUENCE [MRNA]</scope>
</reference>
<reference key="2">
    <citation type="submission" date="1985-08" db="EMBL/GenBank/DDBJ databases">
        <authorList>
            <person name="Caras I.W."/>
        </authorList>
    </citation>
    <scope>SEQUENCE REVISION</scope>
</reference>
<reference key="3">
    <citation type="journal article" date="2005" name="Science">
        <title>The transcriptional landscape of the mammalian genome.</title>
        <authorList>
            <person name="Carninci P."/>
            <person name="Kasukawa T."/>
            <person name="Katayama S."/>
            <person name="Gough J."/>
            <person name="Frith M.C."/>
            <person name="Maeda N."/>
            <person name="Oyama R."/>
            <person name="Ravasi T."/>
            <person name="Lenhard B."/>
            <person name="Wells C."/>
            <person name="Kodzius R."/>
            <person name="Shimokawa K."/>
            <person name="Bajic V.B."/>
            <person name="Brenner S.E."/>
            <person name="Batalov S."/>
            <person name="Forrest A.R."/>
            <person name="Zavolan M."/>
            <person name="Davis M.J."/>
            <person name="Wilming L.G."/>
            <person name="Aidinis V."/>
            <person name="Allen J.E."/>
            <person name="Ambesi-Impiombato A."/>
            <person name="Apweiler R."/>
            <person name="Aturaliya R.N."/>
            <person name="Bailey T.L."/>
            <person name="Bansal M."/>
            <person name="Baxter L."/>
            <person name="Beisel K.W."/>
            <person name="Bersano T."/>
            <person name="Bono H."/>
            <person name="Chalk A.M."/>
            <person name="Chiu K.P."/>
            <person name="Choudhary V."/>
            <person name="Christoffels A."/>
            <person name="Clutterbuck D.R."/>
            <person name="Crowe M.L."/>
            <person name="Dalla E."/>
            <person name="Dalrymple B.P."/>
            <person name="de Bono B."/>
            <person name="Della Gatta G."/>
            <person name="di Bernardo D."/>
            <person name="Down T."/>
            <person name="Engstrom P."/>
            <person name="Fagiolini M."/>
            <person name="Faulkner G."/>
            <person name="Fletcher C.F."/>
            <person name="Fukushima T."/>
            <person name="Furuno M."/>
            <person name="Futaki S."/>
            <person name="Gariboldi M."/>
            <person name="Georgii-Hemming P."/>
            <person name="Gingeras T.R."/>
            <person name="Gojobori T."/>
            <person name="Green R.E."/>
            <person name="Gustincich S."/>
            <person name="Harbers M."/>
            <person name="Hayashi Y."/>
            <person name="Hensch T.K."/>
            <person name="Hirokawa N."/>
            <person name="Hill D."/>
            <person name="Huminiecki L."/>
            <person name="Iacono M."/>
            <person name="Ikeo K."/>
            <person name="Iwama A."/>
            <person name="Ishikawa T."/>
            <person name="Jakt M."/>
            <person name="Kanapin A."/>
            <person name="Katoh M."/>
            <person name="Kawasawa Y."/>
            <person name="Kelso J."/>
            <person name="Kitamura H."/>
            <person name="Kitano H."/>
            <person name="Kollias G."/>
            <person name="Krishnan S.P."/>
            <person name="Kruger A."/>
            <person name="Kummerfeld S.K."/>
            <person name="Kurochkin I.V."/>
            <person name="Lareau L.F."/>
            <person name="Lazarevic D."/>
            <person name="Lipovich L."/>
            <person name="Liu J."/>
            <person name="Liuni S."/>
            <person name="McWilliam S."/>
            <person name="Madan Babu M."/>
            <person name="Madera M."/>
            <person name="Marchionni L."/>
            <person name="Matsuda H."/>
            <person name="Matsuzawa S."/>
            <person name="Miki H."/>
            <person name="Mignone F."/>
            <person name="Miyake S."/>
            <person name="Morris K."/>
            <person name="Mottagui-Tabar S."/>
            <person name="Mulder N."/>
            <person name="Nakano N."/>
            <person name="Nakauchi H."/>
            <person name="Ng P."/>
            <person name="Nilsson R."/>
            <person name="Nishiguchi S."/>
            <person name="Nishikawa S."/>
            <person name="Nori F."/>
            <person name="Ohara O."/>
            <person name="Okazaki Y."/>
            <person name="Orlando V."/>
            <person name="Pang K.C."/>
            <person name="Pavan W.J."/>
            <person name="Pavesi G."/>
            <person name="Pesole G."/>
            <person name="Petrovsky N."/>
            <person name="Piazza S."/>
            <person name="Reed J."/>
            <person name="Reid J.F."/>
            <person name="Ring B.Z."/>
            <person name="Ringwald M."/>
            <person name="Rost B."/>
            <person name="Ruan Y."/>
            <person name="Salzberg S.L."/>
            <person name="Sandelin A."/>
            <person name="Schneider C."/>
            <person name="Schoenbach C."/>
            <person name="Sekiguchi K."/>
            <person name="Semple C.A."/>
            <person name="Seno S."/>
            <person name="Sessa L."/>
            <person name="Sheng Y."/>
            <person name="Shibata Y."/>
            <person name="Shimada H."/>
            <person name="Shimada K."/>
            <person name="Silva D."/>
            <person name="Sinclair B."/>
            <person name="Sperling S."/>
            <person name="Stupka E."/>
            <person name="Sugiura K."/>
            <person name="Sultana R."/>
            <person name="Takenaka Y."/>
            <person name="Taki K."/>
            <person name="Tammoja K."/>
            <person name="Tan S.L."/>
            <person name="Tang S."/>
            <person name="Taylor M.S."/>
            <person name="Tegner J."/>
            <person name="Teichmann S.A."/>
            <person name="Ueda H.R."/>
            <person name="van Nimwegen E."/>
            <person name="Verardo R."/>
            <person name="Wei C.L."/>
            <person name="Yagi K."/>
            <person name="Yamanishi H."/>
            <person name="Zabarovsky E."/>
            <person name="Zhu S."/>
            <person name="Zimmer A."/>
            <person name="Hide W."/>
            <person name="Bult C."/>
            <person name="Grimmond S.M."/>
            <person name="Teasdale R.D."/>
            <person name="Liu E.T."/>
            <person name="Brusic V."/>
            <person name="Quackenbush J."/>
            <person name="Wahlestedt C."/>
            <person name="Mattick J.S."/>
            <person name="Hume D.A."/>
            <person name="Kai C."/>
            <person name="Sasaki D."/>
            <person name="Tomaru Y."/>
            <person name="Fukuda S."/>
            <person name="Kanamori-Katayama M."/>
            <person name="Suzuki M."/>
            <person name="Aoki J."/>
            <person name="Arakawa T."/>
            <person name="Iida J."/>
            <person name="Imamura K."/>
            <person name="Itoh M."/>
            <person name="Kato T."/>
            <person name="Kawaji H."/>
            <person name="Kawagashira N."/>
            <person name="Kawashima T."/>
            <person name="Kojima M."/>
            <person name="Kondo S."/>
            <person name="Konno H."/>
            <person name="Nakano K."/>
            <person name="Ninomiya N."/>
            <person name="Nishio T."/>
            <person name="Okada M."/>
            <person name="Plessy C."/>
            <person name="Shibata K."/>
            <person name="Shiraki T."/>
            <person name="Suzuki S."/>
            <person name="Tagami M."/>
            <person name="Waki K."/>
            <person name="Watahiki A."/>
            <person name="Okamura-Oho Y."/>
            <person name="Suzuki H."/>
            <person name="Kawai J."/>
            <person name="Hayashizaki Y."/>
        </authorList>
    </citation>
    <scope>NUCLEOTIDE SEQUENCE [LARGE SCALE MRNA]</scope>
    <source>
        <strain>C57BL/6J</strain>
        <strain>NOD</strain>
        <tissue>Embryo</tissue>
        <tissue>Embryonic liver</tissue>
        <tissue>Thymus</tissue>
    </source>
</reference>
<reference key="4">
    <citation type="submission" date="2005-07" db="EMBL/GenBank/DDBJ databases">
        <authorList>
            <person name="Mural R.J."/>
            <person name="Adams M.D."/>
            <person name="Myers E.W."/>
            <person name="Smith H.O."/>
            <person name="Venter J.C."/>
        </authorList>
    </citation>
    <scope>NUCLEOTIDE SEQUENCE [LARGE SCALE GENOMIC DNA]</scope>
</reference>
<reference key="5">
    <citation type="journal article" date="2004" name="Genome Res.">
        <title>The status, quality, and expansion of the NIH full-length cDNA project: the Mammalian Gene Collection (MGC).</title>
        <authorList>
            <consortium name="The MGC Project Team"/>
        </authorList>
    </citation>
    <scope>NUCLEOTIDE SEQUENCE [LARGE SCALE MRNA]</scope>
    <source>
        <strain>FVB/N</strain>
        <tissue>Mammary tumor</tissue>
    </source>
</reference>
<reference key="6">
    <citation type="journal article" date="2009" name="J. Biol. Chem.">
        <title>Molecular mechanisms of thioredoxin and glutaredoxin as hydrogen donors for mammalian S phase ribonucleotide reductase.</title>
        <authorList>
            <person name="Avval F.Z."/>
            <person name="Holmgren A."/>
        </authorList>
    </citation>
    <scope>CATALYTIC ACTIVITY</scope>
    <scope>SUBUNIT</scope>
</reference>
<reference key="7">
    <citation type="journal article" date="2010" name="Cell">
        <title>A tissue-specific atlas of mouse protein phosphorylation and expression.</title>
        <authorList>
            <person name="Huttlin E.L."/>
            <person name="Jedrychowski M.P."/>
            <person name="Elias J.E."/>
            <person name="Goswami T."/>
            <person name="Rad R."/>
            <person name="Beausoleil S.A."/>
            <person name="Villen J."/>
            <person name="Haas W."/>
            <person name="Sowa M.E."/>
            <person name="Gygi S.P."/>
        </authorList>
    </citation>
    <scope>IDENTIFICATION BY MASS SPECTROMETRY [LARGE SCALE ANALYSIS]</scope>
    <source>
        <tissue>Brown adipose tissue</tissue>
        <tissue>Heart</tissue>
        <tissue>Kidney</tissue>
        <tissue>Liver</tissue>
        <tissue>Lung</tissue>
        <tissue>Pancreas</tissue>
        <tissue>Spleen</tissue>
        <tissue>Testis</tissue>
    </source>
</reference>
<keyword id="KW-0007">Acetylation</keyword>
<keyword id="KW-0021">Allosteric enzyme</keyword>
<keyword id="KW-0067">ATP-binding</keyword>
<keyword id="KW-0963">Cytoplasm</keyword>
<keyword id="KW-0215">Deoxyribonucleotide synthesis</keyword>
<keyword id="KW-1015">Disulfide bond</keyword>
<keyword id="KW-0547">Nucleotide-binding</keyword>
<keyword id="KW-0560">Oxidoreductase</keyword>
<keyword id="KW-0597">Phosphoprotein</keyword>
<keyword id="KW-1185">Reference proteome</keyword>
<name>RIR1_MOUSE</name>
<organism>
    <name type="scientific">Mus musculus</name>
    <name type="common">Mouse</name>
    <dbReference type="NCBI Taxonomy" id="10090"/>
    <lineage>
        <taxon>Eukaryota</taxon>
        <taxon>Metazoa</taxon>
        <taxon>Chordata</taxon>
        <taxon>Craniata</taxon>
        <taxon>Vertebrata</taxon>
        <taxon>Euteleostomi</taxon>
        <taxon>Mammalia</taxon>
        <taxon>Eutheria</taxon>
        <taxon>Euarchontoglires</taxon>
        <taxon>Glires</taxon>
        <taxon>Rodentia</taxon>
        <taxon>Myomorpha</taxon>
        <taxon>Muroidea</taxon>
        <taxon>Muridae</taxon>
        <taxon>Murinae</taxon>
        <taxon>Mus</taxon>
        <taxon>Mus</taxon>
    </lineage>
</organism>
<gene>
    <name type="primary">Rrm1</name>
</gene>
<comment type="function">
    <text>Provides the precursors necessary for DNA synthesis. Catalyzes the biosynthesis of deoxyribonucleotides from the corresponding ribonucleotides.</text>
</comment>
<comment type="catalytic activity">
    <reaction evidence="4">
        <text>a 2'-deoxyribonucleoside 5'-diphosphate + [thioredoxin]-disulfide + H2O = a ribonucleoside 5'-diphosphate + [thioredoxin]-dithiol</text>
        <dbReference type="Rhea" id="RHEA:23252"/>
        <dbReference type="Rhea" id="RHEA-COMP:10698"/>
        <dbReference type="Rhea" id="RHEA-COMP:10700"/>
        <dbReference type="ChEBI" id="CHEBI:15377"/>
        <dbReference type="ChEBI" id="CHEBI:29950"/>
        <dbReference type="ChEBI" id="CHEBI:50058"/>
        <dbReference type="ChEBI" id="CHEBI:57930"/>
        <dbReference type="ChEBI" id="CHEBI:73316"/>
        <dbReference type="EC" id="1.17.4.1"/>
    </reaction>
</comment>
<comment type="activity regulation">
    <text evidence="2">Under complex allosteric control mediated by deoxynucleoside triphosphates and ATP binding to separate specificity and activation sites on the M1 subunit. The type of nucleotide bound at the specificity site determines substrate preference. It seems probable that ATP makes the enzyme reduce CDP and UDP, dGTP favors ADP reduction and dTTP favors GDP reduction. Stimulated by ATP and inhibited by dATP binding to the activity site, the dATP inhibition is mediated by AHCYL1 which stabilizes dATP in the site (By similarity).</text>
</comment>
<comment type="subunit">
    <text evidence="2">Heterodimer of a large and a small subunit. Interacts with RRM2B. Interacts with AHCYL1 which inhibits its activity (By similarity).</text>
</comment>
<comment type="subcellular location">
    <subcellularLocation>
        <location>Cytoplasm</location>
    </subcellularLocation>
</comment>
<comment type="miscellaneous">
    <text>Two distinct regulatory sites have been defined: the specificity site, which controls substrate specificity, and the activity site which regulates overall catalytic activity. A substrate-binding catalytic site, located on M1, is formed only in the presence of the second subunit M2.</text>
</comment>
<comment type="miscellaneous">
    <text>The level of the enzyme activity is closely correlated with the growth rate of a cell and appears to vary with the cell cycle.</text>
</comment>
<comment type="similarity">
    <text evidence="5">Belongs to the ribonucleoside diphosphate reductase large chain family.</text>
</comment>
<accession>P07742</accession>
<accession>Q91YM8</accession>
<evidence type="ECO:0000250" key="1"/>
<evidence type="ECO:0000250" key="2">
    <source>
        <dbReference type="UniProtKB" id="P23921"/>
    </source>
</evidence>
<evidence type="ECO:0000255" key="3">
    <source>
        <dbReference type="PROSITE-ProRule" id="PRU00492"/>
    </source>
</evidence>
<evidence type="ECO:0000269" key="4">
    <source>
    </source>
</evidence>
<evidence type="ECO:0000305" key="5"/>
<sequence>MHVIKRDGRQERVMFDKITSRIQKLCYGLNMDFVDPAQITMKVIQGLYSGVTTVELDTLAAETAATLTTKHPDYAILAARIAVSNLHKETKKVFSDVMEDLYNYINPHNGRHSPMVASSTLDIVMANKDRLNSAIIYDRDFSYNYFGFKTLERSYLLKINGKVAERPQHMLMRVSVGIHKEDIDAAIETYNLLSEKWFTHASPTLFNAGTNRPQLSSCFLLSMKDDSIEGIYDTLKQCALISKSAGGIGVAVSCIRATGSYIAGTNGNSNGLVPMLRVYNNTARYVDQGGNKRPGAFAIYLEPWHLDIFEFLDLKKNTGKEEQRARDLFFALWIPDLFMKRVETNQDWSLMCPNECPGLDEVWGEEFEKLYESYEKQGRVRKVVKAQQLWYAIIESQTETGTPYMLYKDSCNRKSNQQNLGTIKCSNLCTEIVEYTSKDEVAVCNLASLALNMYVTPEHTYDFEKLAEVTKVIVRNLNKIIDINYYPIPEAHLSNKRHRPIGIGVQGLADAFILMRYPFESPEAQLLNKQIFETIYYGALEASCELAKEYGPYETYEGSPVSKGILQYDMWNVAPTDLWDWKPLKEKIAKYGIRNSLLIAPMPTASTAQILGNNESIEPYTSNIYTRRVLSGEFQIVNPHLLKDLTERGLWNEEMKNQIIACNGSIQSIPEIPDDLKQLYKTVWEISQKTVLKMAAERGAFIDQSQSLNIHIAEPNYGKLTSMHFYGWKQGLKTGMYYLRTRPAANPIQFTLNKEKLKDKEKALKEEEEKERNTAAMVCSLENREECLMCGS</sequence>
<proteinExistence type="evidence at protein level"/>
<dbReference type="EC" id="1.17.4.1"/>
<dbReference type="EMBL" id="K02927">
    <property type="protein sequence ID" value="AAA40061.1"/>
    <property type="molecule type" value="mRNA"/>
</dbReference>
<dbReference type="EMBL" id="AK088043">
    <property type="protein sequence ID" value="BAC40112.1"/>
    <property type="molecule type" value="mRNA"/>
</dbReference>
<dbReference type="EMBL" id="AK137075">
    <property type="protein sequence ID" value="BAE23230.1"/>
    <property type="molecule type" value="mRNA"/>
</dbReference>
<dbReference type="EMBL" id="AK168586">
    <property type="protein sequence ID" value="BAE40455.1"/>
    <property type="molecule type" value="mRNA"/>
</dbReference>
<dbReference type="EMBL" id="CH466531">
    <property type="protein sequence ID" value="EDL16602.1"/>
    <property type="molecule type" value="Genomic_DNA"/>
</dbReference>
<dbReference type="EMBL" id="BC016450">
    <property type="protein sequence ID" value="AAH16450.1"/>
    <property type="molecule type" value="mRNA"/>
</dbReference>
<dbReference type="CCDS" id="CCDS40049.1"/>
<dbReference type="PIR" id="A24050">
    <property type="entry name" value="A24050"/>
</dbReference>
<dbReference type="RefSeq" id="NP_033129.2">
    <property type="nucleotide sequence ID" value="NM_009103.3"/>
</dbReference>
<dbReference type="SMR" id="P07742"/>
<dbReference type="BioGRID" id="203022">
    <property type="interactions" value="7"/>
</dbReference>
<dbReference type="ComplexPortal" id="CPX-370">
    <property type="entry name" value="Ribonucleoside-diphosphate reductase RR1 complex, RRM2 variant"/>
</dbReference>
<dbReference type="ComplexPortal" id="CPX-371">
    <property type="entry name" value="Ribonucleoside-diphosphate reductase RR1 complex, RRM2B variant"/>
</dbReference>
<dbReference type="FunCoup" id="P07742">
    <property type="interactions" value="2887"/>
</dbReference>
<dbReference type="IntAct" id="P07742">
    <property type="interactions" value="1"/>
</dbReference>
<dbReference type="STRING" id="10090.ENSMUSP00000033283"/>
<dbReference type="BindingDB" id="P07742"/>
<dbReference type="ChEMBL" id="CHEMBL3739"/>
<dbReference type="GlyGen" id="P07742">
    <property type="glycosylation" value="4 sites, 1 N-linked glycan (1 site), 1 O-linked glycan (2 sites)"/>
</dbReference>
<dbReference type="iPTMnet" id="P07742"/>
<dbReference type="PhosphoSitePlus" id="P07742"/>
<dbReference type="SwissPalm" id="P07742"/>
<dbReference type="jPOST" id="P07742"/>
<dbReference type="PaxDb" id="10090-ENSMUSP00000033283"/>
<dbReference type="PeptideAtlas" id="P07742"/>
<dbReference type="ProteomicsDB" id="253324"/>
<dbReference type="Pumba" id="P07742"/>
<dbReference type="Antibodypedia" id="10853">
    <property type="antibodies" value="683 antibodies from 40 providers"/>
</dbReference>
<dbReference type="DNASU" id="20133"/>
<dbReference type="Ensembl" id="ENSMUST00000033283.10">
    <property type="protein sequence ID" value="ENSMUSP00000033283.10"/>
    <property type="gene ID" value="ENSMUSG00000030978.11"/>
</dbReference>
<dbReference type="GeneID" id="20133"/>
<dbReference type="KEGG" id="mmu:20133"/>
<dbReference type="UCSC" id="uc009irp.2">
    <property type="organism name" value="mouse"/>
</dbReference>
<dbReference type="AGR" id="MGI:98180"/>
<dbReference type="CTD" id="6240"/>
<dbReference type="MGI" id="MGI:98180">
    <property type="gene designation" value="Rrm1"/>
</dbReference>
<dbReference type="VEuPathDB" id="HostDB:ENSMUSG00000030978"/>
<dbReference type="eggNOG" id="KOG1112">
    <property type="taxonomic scope" value="Eukaryota"/>
</dbReference>
<dbReference type="GeneTree" id="ENSGT00910000144246"/>
<dbReference type="HOGENOM" id="CLU_000404_1_0_1"/>
<dbReference type="InParanoid" id="P07742"/>
<dbReference type="OMA" id="IELPQHM"/>
<dbReference type="OrthoDB" id="3000483at2759"/>
<dbReference type="PhylomeDB" id="P07742"/>
<dbReference type="TreeFam" id="TF300578"/>
<dbReference type="Reactome" id="R-MMU-499943">
    <property type="pathway name" value="Interconversion of nucleotide di- and triphosphates"/>
</dbReference>
<dbReference type="BioGRID-ORCS" id="20133">
    <property type="hits" value="27 hits in 71 CRISPR screens"/>
</dbReference>
<dbReference type="ChiTaRS" id="Rrm1">
    <property type="organism name" value="mouse"/>
</dbReference>
<dbReference type="PRO" id="PR:P07742"/>
<dbReference type="Proteomes" id="UP000000589">
    <property type="component" value="Chromosome 7"/>
</dbReference>
<dbReference type="RNAct" id="P07742">
    <property type="molecule type" value="protein"/>
</dbReference>
<dbReference type="Bgee" id="ENSMUSG00000030978">
    <property type="expression patterns" value="Expressed in fetal liver hematopoietic progenitor cell and 280 other cell types or tissues"/>
</dbReference>
<dbReference type="ExpressionAtlas" id="P07742">
    <property type="expression patterns" value="baseline and differential"/>
</dbReference>
<dbReference type="GO" id="GO:0034451">
    <property type="term" value="C:centriolar satellite"/>
    <property type="evidence" value="ECO:0007669"/>
    <property type="project" value="Ensembl"/>
</dbReference>
<dbReference type="GO" id="GO:0036064">
    <property type="term" value="C:ciliary basal body"/>
    <property type="evidence" value="ECO:0007669"/>
    <property type="project" value="Ensembl"/>
</dbReference>
<dbReference type="GO" id="GO:0005829">
    <property type="term" value="C:cytosol"/>
    <property type="evidence" value="ECO:0000266"/>
    <property type="project" value="ComplexPortal"/>
</dbReference>
<dbReference type="GO" id="GO:0005739">
    <property type="term" value="C:mitochondrion"/>
    <property type="evidence" value="ECO:0007669"/>
    <property type="project" value="GOC"/>
</dbReference>
<dbReference type="GO" id="GO:0043025">
    <property type="term" value="C:neuronal cell body"/>
    <property type="evidence" value="ECO:0007669"/>
    <property type="project" value="Ensembl"/>
</dbReference>
<dbReference type="GO" id="GO:0005635">
    <property type="term" value="C:nuclear envelope"/>
    <property type="evidence" value="ECO:0007669"/>
    <property type="project" value="Ensembl"/>
</dbReference>
<dbReference type="GO" id="GO:0005971">
    <property type="term" value="C:ribonucleoside-diphosphate reductase complex"/>
    <property type="evidence" value="ECO:0000314"/>
    <property type="project" value="MGI"/>
</dbReference>
<dbReference type="GO" id="GO:0005524">
    <property type="term" value="F:ATP binding"/>
    <property type="evidence" value="ECO:0007669"/>
    <property type="project" value="UniProtKB-KW"/>
</dbReference>
<dbReference type="GO" id="GO:0097718">
    <property type="term" value="F:disordered domain specific binding"/>
    <property type="evidence" value="ECO:0000353"/>
    <property type="project" value="CAFA"/>
</dbReference>
<dbReference type="GO" id="GO:0042802">
    <property type="term" value="F:identical protein binding"/>
    <property type="evidence" value="ECO:0007669"/>
    <property type="project" value="Ensembl"/>
</dbReference>
<dbReference type="GO" id="GO:0017076">
    <property type="term" value="F:purine nucleotide binding"/>
    <property type="evidence" value="ECO:0000314"/>
    <property type="project" value="MGI"/>
</dbReference>
<dbReference type="GO" id="GO:0004748">
    <property type="term" value="F:ribonucleoside-diphosphate reductase activity, thioredoxin disulfide as acceptor"/>
    <property type="evidence" value="ECO:0000314"/>
    <property type="project" value="UniProtKB"/>
</dbReference>
<dbReference type="GO" id="GO:0009265">
    <property type="term" value="P:2'-deoxyribonucleotide biosynthetic process"/>
    <property type="evidence" value="ECO:0000314"/>
    <property type="project" value="ComplexPortal"/>
</dbReference>
<dbReference type="GO" id="GO:0021846">
    <property type="term" value="P:cell proliferation in forebrain"/>
    <property type="evidence" value="ECO:0007669"/>
    <property type="project" value="Ensembl"/>
</dbReference>
<dbReference type="GO" id="GO:0009263">
    <property type="term" value="P:deoxyribonucleotide biosynthetic process"/>
    <property type="evidence" value="ECO:0000314"/>
    <property type="project" value="UniProtKB"/>
</dbReference>
<dbReference type="GO" id="GO:0006281">
    <property type="term" value="P:DNA repair"/>
    <property type="evidence" value="ECO:0000266"/>
    <property type="project" value="ComplexPortal"/>
</dbReference>
<dbReference type="GO" id="GO:0000731">
    <property type="term" value="P:DNA synthesis involved in DNA repair"/>
    <property type="evidence" value="ECO:0000303"/>
    <property type="project" value="ComplexPortal"/>
</dbReference>
<dbReference type="GO" id="GO:0008584">
    <property type="term" value="P:male gonad development"/>
    <property type="evidence" value="ECO:0007669"/>
    <property type="project" value="Ensembl"/>
</dbReference>
<dbReference type="GO" id="GO:0006264">
    <property type="term" value="P:mitochondrial DNA replication"/>
    <property type="evidence" value="ECO:0000315"/>
    <property type="project" value="ComplexPortal"/>
</dbReference>
<dbReference type="GO" id="GO:0070318">
    <property type="term" value="P:positive regulation of G0 to G1 transition"/>
    <property type="evidence" value="ECO:0000314"/>
    <property type="project" value="ComplexPortal"/>
</dbReference>
<dbReference type="GO" id="GO:1900087">
    <property type="term" value="P:positive regulation of G1/S transition of mitotic cell cycle"/>
    <property type="evidence" value="ECO:0000266"/>
    <property type="project" value="ComplexPortal"/>
</dbReference>
<dbReference type="GO" id="GO:0010971">
    <property type="term" value="P:positive regulation of G2/M transition of mitotic cell cycle"/>
    <property type="evidence" value="ECO:0000266"/>
    <property type="project" value="ComplexPortal"/>
</dbReference>
<dbReference type="GO" id="GO:0051290">
    <property type="term" value="P:protein heterotetramerization"/>
    <property type="evidence" value="ECO:0000353"/>
    <property type="project" value="UniProtKB"/>
</dbReference>
<dbReference type="GO" id="GO:0006206">
    <property type="term" value="P:pyrimidine nucleobase metabolic process"/>
    <property type="evidence" value="ECO:0007669"/>
    <property type="project" value="Ensembl"/>
</dbReference>
<dbReference type="GO" id="GO:0010212">
    <property type="term" value="P:response to ionizing radiation"/>
    <property type="evidence" value="ECO:0007669"/>
    <property type="project" value="Ensembl"/>
</dbReference>
<dbReference type="GO" id="GO:0060041">
    <property type="term" value="P:retina development in camera-type eye"/>
    <property type="evidence" value="ECO:0007669"/>
    <property type="project" value="Ensembl"/>
</dbReference>
<dbReference type="GO" id="GO:0009185">
    <property type="term" value="P:ribonucleoside diphosphate metabolic process"/>
    <property type="evidence" value="ECO:0000314"/>
    <property type="project" value="ComplexPortal"/>
</dbReference>
<dbReference type="CDD" id="cd01679">
    <property type="entry name" value="RNR_I"/>
    <property type="match status" value="1"/>
</dbReference>
<dbReference type="FunFam" id="3.20.70.20:FF:000001">
    <property type="entry name" value="Ribonucleoside-diphosphate reductase"/>
    <property type="match status" value="1"/>
</dbReference>
<dbReference type="Gene3D" id="3.20.70.20">
    <property type="match status" value="1"/>
</dbReference>
<dbReference type="InterPro" id="IPR005144">
    <property type="entry name" value="ATP-cone_dom"/>
</dbReference>
<dbReference type="InterPro" id="IPR013346">
    <property type="entry name" value="NrdE_NrdA_C"/>
</dbReference>
<dbReference type="InterPro" id="IPR000788">
    <property type="entry name" value="RNR_lg_C"/>
</dbReference>
<dbReference type="InterPro" id="IPR013509">
    <property type="entry name" value="RNR_lsu_N"/>
</dbReference>
<dbReference type="InterPro" id="IPR008926">
    <property type="entry name" value="RNR_R1-su_N"/>
</dbReference>
<dbReference type="InterPro" id="IPR039718">
    <property type="entry name" value="Rrm1"/>
</dbReference>
<dbReference type="NCBIfam" id="TIGR02506">
    <property type="entry name" value="NrdE_NrdA"/>
    <property type="match status" value="1"/>
</dbReference>
<dbReference type="PANTHER" id="PTHR11573">
    <property type="entry name" value="RIBONUCLEOSIDE-DIPHOSPHATE REDUCTASE LARGE CHAIN"/>
    <property type="match status" value="1"/>
</dbReference>
<dbReference type="PANTHER" id="PTHR11573:SF6">
    <property type="entry name" value="RIBONUCLEOSIDE-DIPHOSPHATE REDUCTASE LARGE SUBUNIT"/>
    <property type="match status" value="1"/>
</dbReference>
<dbReference type="Pfam" id="PF03477">
    <property type="entry name" value="ATP-cone"/>
    <property type="match status" value="1"/>
</dbReference>
<dbReference type="Pfam" id="PF02867">
    <property type="entry name" value="Ribonuc_red_lgC"/>
    <property type="match status" value="1"/>
</dbReference>
<dbReference type="Pfam" id="PF00317">
    <property type="entry name" value="Ribonuc_red_lgN"/>
    <property type="match status" value="1"/>
</dbReference>
<dbReference type="PRINTS" id="PR01183">
    <property type="entry name" value="RIBORDTASEM1"/>
</dbReference>
<dbReference type="SUPFAM" id="SSF51998">
    <property type="entry name" value="PFL-like glycyl radical enzymes"/>
    <property type="match status" value="1"/>
</dbReference>
<dbReference type="SUPFAM" id="SSF48168">
    <property type="entry name" value="R1 subunit of ribonucleotide reductase, N-terminal domain"/>
    <property type="match status" value="1"/>
</dbReference>
<dbReference type="PROSITE" id="PS51161">
    <property type="entry name" value="ATP_CONE"/>
    <property type="match status" value="1"/>
</dbReference>
<dbReference type="PROSITE" id="PS00089">
    <property type="entry name" value="RIBORED_LARGE"/>
    <property type="match status" value="1"/>
</dbReference>